<comment type="function">
    <text>Transfers the 4'-phosphopantetheine moiety from coenzyme A to the 'Ser-36' of acyl-carrier-protein.</text>
</comment>
<comment type="catalytic activity">
    <reaction evidence="2">
        <text>apo-[ACP] + CoA = holo-[ACP] + adenosine 3',5'-bisphosphate + H(+)</text>
        <dbReference type="Rhea" id="RHEA:12068"/>
        <dbReference type="Rhea" id="RHEA-COMP:9685"/>
        <dbReference type="Rhea" id="RHEA-COMP:9690"/>
        <dbReference type="ChEBI" id="CHEBI:15378"/>
        <dbReference type="ChEBI" id="CHEBI:29999"/>
        <dbReference type="ChEBI" id="CHEBI:57287"/>
        <dbReference type="ChEBI" id="CHEBI:58343"/>
        <dbReference type="ChEBI" id="CHEBI:64479"/>
        <dbReference type="EC" id="2.7.8.7"/>
    </reaction>
</comment>
<comment type="cofactor">
    <cofactor evidence="2">
        <name>Mg(2+)</name>
        <dbReference type="ChEBI" id="CHEBI:18420"/>
    </cofactor>
</comment>
<comment type="subunit">
    <text evidence="1">Homodimer.</text>
</comment>
<comment type="subcellular location">
    <subcellularLocation>
        <location evidence="2">Cytoplasm</location>
    </subcellularLocation>
</comment>
<comment type="similarity">
    <text evidence="2">Belongs to the P-Pant transferase superfamily. AcpS family.</text>
</comment>
<keyword id="KW-0963">Cytoplasm</keyword>
<keyword id="KW-0275">Fatty acid biosynthesis</keyword>
<keyword id="KW-0276">Fatty acid metabolism</keyword>
<keyword id="KW-0444">Lipid biosynthesis</keyword>
<keyword id="KW-0443">Lipid metabolism</keyword>
<keyword id="KW-0460">Magnesium</keyword>
<keyword id="KW-0479">Metal-binding</keyword>
<keyword id="KW-1185">Reference proteome</keyword>
<keyword id="KW-0808">Transferase</keyword>
<gene>
    <name evidence="2" type="primary">acpS</name>
    <name type="synonym">dpj</name>
    <name type="ordered locus">Z3844</name>
    <name type="ordered locus">ECs3429</name>
</gene>
<organism>
    <name type="scientific">Escherichia coli O157:H7</name>
    <dbReference type="NCBI Taxonomy" id="83334"/>
    <lineage>
        <taxon>Bacteria</taxon>
        <taxon>Pseudomonadati</taxon>
        <taxon>Pseudomonadota</taxon>
        <taxon>Gammaproteobacteria</taxon>
        <taxon>Enterobacterales</taxon>
        <taxon>Enterobacteriaceae</taxon>
        <taxon>Escherichia</taxon>
    </lineage>
</organism>
<dbReference type="EC" id="2.7.8.7" evidence="2"/>
<dbReference type="EMBL" id="AE005174">
    <property type="protein sequence ID" value="AAG57678.1"/>
    <property type="molecule type" value="Genomic_DNA"/>
</dbReference>
<dbReference type="EMBL" id="BA000007">
    <property type="protein sequence ID" value="BAB36852.1"/>
    <property type="molecule type" value="Genomic_DNA"/>
</dbReference>
<dbReference type="PIR" id="B85902">
    <property type="entry name" value="B85902"/>
</dbReference>
<dbReference type="PIR" id="E91057">
    <property type="entry name" value="E91057"/>
</dbReference>
<dbReference type="RefSeq" id="NP_311456.1">
    <property type="nucleotide sequence ID" value="NC_002695.1"/>
</dbReference>
<dbReference type="RefSeq" id="WP_000986037.1">
    <property type="nucleotide sequence ID" value="NZ_VOAI01000001.1"/>
</dbReference>
<dbReference type="SMR" id="Q8XA39"/>
<dbReference type="STRING" id="155864.Z3844"/>
<dbReference type="GeneID" id="75172677"/>
<dbReference type="GeneID" id="914898"/>
<dbReference type="KEGG" id="ece:Z3844"/>
<dbReference type="KEGG" id="ecs:ECs_3429"/>
<dbReference type="PATRIC" id="fig|386585.9.peg.3583"/>
<dbReference type="eggNOG" id="COG0736">
    <property type="taxonomic scope" value="Bacteria"/>
</dbReference>
<dbReference type="HOGENOM" id="CLU_089696_3_1_6"/>
<dbReference type="OMA" id="DERHYAV"/>
<dbReference type="Proteomes" id="UP000000558">
    <property type="component" value="Chromosome"/>
</dbReference>
<dbReference type="Proteomes" id="UP000002519">
    <property type="component" value="Chromosome"/>
</dbReference>
<dbReference type="GO" id="GO:0005737">
    <property type="term" value="C:cytoplasm"/>
    <property type="evidence" value="ECO:0007669"/>
    <property type="project" value="UniProtKB-SubCell"/>
</dbReference>
<dbReference type="GO" id="GO:0008897">
    <property type="term" value="F:holo-[acyl-carrier-protein] synthase activity"/>
    <property type="evidence" value="ECO:0007669"/>
    <property type="project" value="UniProtKB-UniRule"/>
</dbReference>
<dbReference type="GO" id="GO:0000287">
    <property type="term" value="F:magnesium ion binding"/>
    <property type="evidence" value="ECO:0007669"/>
    <property type="project" value="UniProtKB-UniRule"/>
</dbReference>
<dbReference type="GO" id="GO:0006633">
    <property type="term" value="P:fatty acid biosynthetic process"/>
    <property type="evidence" value="ECO:0007669"/>
    <property type="project" value="UniProtKB-UniRule"/>
</dbReference>
<dbReference type="FunFam" id="3.90.470.20:FF:000001">
    <property type="entry name" value="Holo-[acyl-carrier-protein] synthase"/>
    <property type="match status" value="1"/>
</dbReference>
<dbReference type="Gene3D" id="3.90.470.20">
    <property type="entry name" value="4'-phosphopantetheinyl transferase domain"/>
    <property type="match status" value="1"/>
</dbReference>
<dbReference type="HAMAP" id="MF_00101">
    <property type="entry name" value="AcpS"/>
    <property type="match status" value="1"/>
</dbReference>
<dbReference type="InterPro" id="IPR008278">
    <property type="entry name" value="4-PPantetheinyl_Trfase_dom"/>
</dbReference>
<dbReference type="InterPro" id="IPR037143">
    <property type="entry name" value="4-PPantetheinyl_Trfase_dom_sf"/>
</dbReference>
<dbReference type="InterPro" id="IPR002582">
    <property type="entry name" value="ACPS"/>
</dbReference>
<dbReference type="InterPro" id="IPR004568">
    <property type="entry name" value="Ppantetheine-prot_Trfase_dom"/>
</dbReference>
<dbReference type="NCBIfam" id="TIGR00516">
    <property type="entry name" value="acpS"/>
    <property type="match status" value="1"/>
</dbReference>
<dbReference type="NCBIfam" id="TIGR00556">
    <property type="entry name" value="pantethn_trn"/>
    <property type="match status" value="1"/>
</dbReference>
<dbReference type="Pfam" id="PF01648">
    <property type="entry name" value="ACPS"/>
    <property type="match status" value="1"/>
</dbReference>
<dbReference type="SUPFAM" id="SSF56214">
    <property type="entry name" value="4'-phosphopantetheinyl transferase"/>
    <property type="match status" value="1"/>
</dbReference>
<reference key="1">
    <citation type="journal article" date="2001" name="Nature">
        <title>Genome sequence of enterohaemorrhagic Escherichia coli O157:H7.</title>
        <authorList>
            <person name="Perna N.T."/>
            <person name="Plunkett G. III"/>
            <person name="Burland V."/>
            <person name="Mau B."/>
            <person name="Glasner J.D."/>
            <person name="Rose D.J."/>
            <person name="Mayhew G.F."/>
            <person name="Evans P.S."/>
            <person name="Gregor J."/>
            <person name="Kirkpatrick H.A."/>
            <person name="Posfai G."/>
            <person name="Hackett J."/>
            <person name="Klink S."/>
            <person name="Boutin A."/>
            <person name="Shao Y."/>
            <person name="Miller L."/>
            <person name="Grotbeck E.J."/>
            <person name="Davis N.W."/>
            <person name="Lim A."/>
            <person name="Dimalanta E.T."/>
            <person name="Potamousis K."/>
            <person name="Apodaca J."/>
            <person name="Anantharaman T.S."/>
            <person name="Lin J."/>
            <person name="Yen G."/>
            <person name="Schwartz D.C."/>
            <person name="Welch R.A."/>
            <person name="Blattner F.R."/>
        </authorList>
    </citation>
    <scope>NUCLEOTIDE SEQUENCE [LARGE SCALE GENOMIC DNA]</scope>
    <source>
        <strain>O157:H7 / EDL933 / ATCC 700927 / EHEC</strain>
    </source>
</reference>
<reference key="2">
    <citation type="journal article" date="2001" name="DNA Res.">
        <title>Complete genome sequence of enterohemorrhagic Escherichia coli O157:H7 and genomic comparison with a laboratory strain K-12.</title>
        <authorList>
            <person name="Hayashi T."/>
            <person name="Makino K."/>
            <person name="Ohnishi M."/>
            <person name="Kurokawa K."/>
            <person name="Ishii K."/>
            <person name="Yokoyama K."/>
            <person name="Han C.-G."/>
            <person name="Ohtsubo E."/>
            <person name="Nakayama K."/>
            <person name="Murata T."/>
            <person name="Tanaka M."/>
            <person name="Tobe T."/>
            <person name="Iida T."/>
            <person name="Takami H."/>
            <person name="Honda T."/>
            <person name="Sasakawa C."/>
            <person name="Ogasawara N."/>
            <person name="Yasunaga T."/>
            <person name="Kuhara S."/>
            <person name="Shiba T."/>
            <person name="Hattori M."/>
            <person name="Shinagawa H."/>
        </authorList>
    </citation>
    <scope>NUCLEOTIDE SEQUENCE [LARGE SCALE GENOMIC DNA]</scope>
    <source>
        <strain>O157:H7 / Sakai / RIMD 0509952 / EHEC</strain>
    </source>
</reference>
<protein>
    <recommendedName>
        <fullName evidence="2">Holo-[acyl-carrier-protein] synthase</fullName>
        <shortName evidence="2">Holo-ACP synthase</shortName>
        <ecNumber evidence="2">2.7.8.7</ecNumber>
    </recommendedName>
    <alternativeName>
        <fullName evidence="2">4'-phosphopantetheinyl transferase AcpS</fullName>
    </alternativeName>
</protein>
<name>ACPS_ECO57</name>
<proteinExistence type="inferred from homology"/>
<sequence length="126" mass="14124">MAILGLGTDIVEIARIEAVIARSGERLARRVLSDNEWEIWKTHHQPVRFLAKRFAVKEAAAKAFGTGIRNGLAFNQFEVFNDELGKPRLRLWGEALKLAEKLGVANMHVTLADERHYACATVIIES</sequence>
<feature type="initiator methionine" description="Removed" evidence="1">
    <location>
        <position position="1"/>
    </location>
</feature>
<feature type="chain" id="PRO_0000175645" description="Holo-[acyl-carrier-protein] synthase">
    <location>
        <begin position="2"/>
        <end position="126"/>
    </location>
</feature>
<feature type="binding site" evidence="2">
    <location>
        <position position="9"/>
    </location>
    <ligand>
        <name>Mg(2+)</name>
        <dbReference type="ChEBI" id="CHEBI:18420"/>
    </ligand>
</feature>
<feature type="binding site" evidence="2">
    <location>
        <position position="58"/>
    </location>
    <ligand>
        <name>Mg(2+)</name>
        <dbReference type="ChEBI" id="CHEBI:18420"/>
    </ligand>
</feature>
<evidence type="ECO:0000250" key="1"/>
<evidence type="ECO:0000255" key="2">
    <source>
        <dbReference type="HAMAP-Rule" id="MF_00101"/>
    </source>
</evidence>
<accession>Q8XA39</accession>